<sequence length="338" mass="35381">MAGSHPYFNQPDSTHPSPPSAPPSLRWYQRCQPSDATSGLLVALLGGGLPAGFVGPLSRMAYQASNLPSLELLIWRCLFHLPIALLLKLRGDPLLGTPDIRSRAFFCALLNILSIGCAYSAVQVVPAGNAATVRKGSSTVCSAVLTLCLESQGLSGYDWCGLLGCILGLIIIVGPGLWTLQEGTTGVYTALGYVEAFLGGLALSLRLLVYRSLHFPPCLPTVAFLSGLVGLLGSVPGLFVLQAPVLPSDLLSWSCVGAVGILALVSFTCVGYAVTKAHPALVCAVLHSEVVVALILQYYMLHETVAPSDIVAAGVVLGSIAIITAQNLSCERTGRVEE</sequence>
<proteinExistence type="evidence at transcript level"/>
<protein>
    <recommendedName>
        <fullName>Solute carrier family 35 member G3</fullName>
    </recommendedName>
    <alternativeName>
        <fullName>Acyl-malonyl-condensing enzyme 1</fullName>
    </alternativeName>
    <alternativeName>
        <fullName>Transmembrane protein 21A</fullName>
    </alternativeName>
</protein>
<gene>
    <name type="primary">SLC35G3</name>
    <name type="synonym">AMAC1</name>
    <name type="synonym">TMEM21A</name>
</gene>
<comment type="subcellular location">
    <subcellularLocation>
        <location evidence="4">Membrane</location>
        <topology evidence="4">Multi-pass membrane protein</topology>
    </subcellularLocation>
</comment>
<comment type="tissue specificity">
    <text evidence="3">Expressed in testis.</text>
</comment>
<comment type="miscellaneous">
    <text>The gene encoding this protein appears to have arisen by SVA-mediated retrotransposition of the SLC35G6 gene in the primate lineage.</text>
</comment>
<comment type="similarity">
    <text evidence="4">Belongs to the SLC35G solute transporter family.</text>
</comment>
<evidence type="ECO:0000255" key="1"/>
<evidence type="ECO:0000256" key="2">
    <source>
        <dbReference type="SAM" id="MobiDB-lite"/>
    </source>
</evidence>
<evidence type="ECO:0000269" key="3">
    <source>
    </source>
</evidence>
<evidence type="ECO:0000305" key="4"/>
<feature type="chain" id="PRO_0000269553" description="Solute carrier family 35 member G3">
    <location>
        <begin position="1"/>
        <end position="338"/>
    </location>
</feature>
<feature type="transmembrane region" description="Helical" evidence="1">
    <location>
        <begin position="37"/>
        <end position="57"/>
    </location>
</feature>
<feature type="transmembrane region" description="Helical" evidence="1">
    <location>
        <begin position="67"/>
        <end position="87"/>
    </location>
</feature>
<feature type="transmembrane region" description="Helical" evidence="1">
    <location>
        <begin position="105"/>
        <end position="125"/>
    </location>
</feature>
<feature type="transmembrane region" description="Helical" evidence="1">
    <location>
        <begin position="160"/>
        <end position="180"/>
    </location>
</feature>
<feature type="transmembrane region" description="Helical" evidence="1">
    <location>
        <begin position="185"/>
        <end position="205"/>
    </location>
</feature>
<feature type="transmembrane region" description="Helical" evidence="1">
    <location>
        <begin position="221"/>
        <end position="241"/>
    </location>
</feature>
<feature type="transmembrane region" description="Helical" evidence="1">
    <location>
        <begin position="250"/>
        <end position="270"/>
    </location>
</feature>
<feature type="transmembrane region" description="Helical" evidence="1">
    <location>
        <begin position="281"/>
        <end position="301"/>
    </location>
</feature>
<feature type="transmembrane region" description="Helical" evidence="1">
    <location>
        <begin position="305"/>
        <end position="325"/>
    </location>
</feature>
<feature type="domain" description="EamA 1">
    <location>
        <begin position="49"/>
        <end position="174"/>
    </location>
</feature>
<feature type="domain" description="EamA 2">
    <location>
        <begin position="272"/>
        <end position="325"/>
    </location>
</feature>
<feature type="region of interest" description="Disordered" evidence="2">
    <location>
        <begin position="1"/>
        <end position="24"/>
    </location>
</feature>
<keyword id="KW-0472">Membrane</keyword>
<keyword id="KW-1185">Reference proteome</keyword>
<keyword id="KW-0677">Repeat</keyword>
<keyword id="KW-0812">Transmembrane</keyword>
<keyword id="KW-1133">Transmembrane helix</keyword>
<organism>
    <name type="scientific">Homo sapiens</name>
    <name type="common">Human</name>
    <dbReference type="NCBI Taxonomy" id="9606"/>
    <lineage>
        <taxon>Eukaryota</taxon>
        <taxon>Metazoa</taxon>
        <taxon>Chordata</taxon>
        <taxon>Craniata</taxon>
        <taxon>Vertebrata</taxon>
        <taxon>Euteleostomi</taxon>
        <taxon>Mammalia</taxon>
        <taxon>Eutheria</taxon>
        <taxon>Euarchontoglires</taxon>
        <taxon>Primates</taxon>
        <taxon>Haplorrhini</taxon>
        <taxon>Catarrhini</taxon>
        <taxon>Hominidae</taxon>
        <taxon>Homo</taxon>
    </lineage>
</organism>
<name>S35G3_HUMAN</name>
<accession>Q8N808</accession>
<accession>B9EGE9</accession>
<reference key="1">
    <citation type="journal article" date="2004" name="Nat. Genet.">
        <title>Complete sequencing and characterization of 21,243 full-length human cDNAs.</title>
        <authorList>
            <person name="Ota T."/>
            <person name="Suzuki Y."/>
            <person name="Nishikawa T."/>
            <person name="Otsuki T."/>
            <person name="Sugiyama T."/>
            <person name="Irie R."/>
            <person name="Wakamatsu A."/>
            <person name="Hayashi K."/>
            <person name="Sato H."/>
            <person name="Nagai K."/>
            <person name="Kimura K."/>
            <person name="Makita H."/>
            <person name="Sekine M."/>
            <person name="Obayashi M."/>
            <person name="Nishi T."/>
            <person name="Shibahara T."/>
            <person name="Tanaka T."/>
            <person name="Ishii S."/>
            <person name="Yamamoto J."/>
            <person name="Saito K."/>
            <person name="Kawai Y."/>
            <person name="Isono Y."/>
            <person name="Nakamura Y."/>
            <person name="Nagahari K."/>
            <person name="Murakami K."/>
            <person name="Yasuda T."/>
            <person name="Iwayanagi T."/>
            <person name="Wagatsuma M."/>
            <person name="Shiratori A."/>
            <person name="Sudo H."/>
            <person name="Hosoiri T."/>
            <person name="Kaku Y."/>
            <person name="Kodaira H."/>
            <person name="Kondo H."/>
            <person name="Sugawara M."/>
            <person name="Takahashi M."/>
            <person name="Kanda K."/>
            <person name="Yokoi T."/>
            <person name="Furuya T."/>
            <person name="Kikkawa E."/>
            <person name="Omura Y."/>
            <person name="Abe K."/>
            <person name="Kamihara K."/>
            <person name="Katsuta N."/>
            <person name="Sato K."/>
            <person name="Tanikawa M."/>
            <person name="Yamazaki M."/>
            <person name="Ninomiya K."/>
            <person name="Ishibashi T."/>
            <person name="Yamashita H."/>
            <person name="Murakawa K."/>
            <person name="Fujimori K."/>
            <person name="Tanai H."/>
            <person name="Kimata M."/>
            <person name="Watanabe M."/>
            <person name="Hiraoka S."/>
            <person name="Chiba Y."/>
            <person name="Ishida S."/>
            <person name="Ono Y."/>
            <person name="Takiguchi S."/>
            <person name="Watanabe S."/>
            <person name="Yosida M."/>
            <person name="Hotuta T."/>
            <person name="Kusano J."/>
            <person name="Kanehori K."/>
            <person name="Takahashi-Fujii A."/>
            <person name="Hara H."/>
            <person name="Tanase T.-O."/>
            <person name="Nomura Y."/>
            <person name="Togiya S."/>
            <person name="Komai F."/>
            <person name="Hara R."/>
            <person name="Takeuchi K."/>
            <person name="Arita M."/>
            <person name="Imose N."/>
            <person name="Musashino K."/>
            <person name="Yuuki H."/>
            <person name="Oshima A."/>
            <person name="Sasaki N."/>
            <person name="Aotsuka S."/>
            <person name="Yoshikawa Y."/>
            <person name="Matsunawa H."/>
            <person name="Ichihara T."/>
            <person name="Shiohata N."/>
            <person name="Sano S."/>
            <person name="Moriya S."/>
            <person name="Momiyama H."/>
            <person name="Satoh N."/>
            <person name="Takami S."/>
            <person name="Terashima Y."/>
            <person name="Suzuki O."/>
            <person name="Nakagawa S."/>
            <person name="Senoh A."/>
            <person name="Mizoguchi H."/>
            <person name="Goto Y."/>
            <person name="Shimizu F."/>
            <person name="Wakebe H."/>
            <person name="Hishigaki H."/>
            <person name="Watanabe T."/>
            <person name="Sugiyama A."/>
            <person name="Takemoto M."/>
            <person name="Kawakami B."/>
            <person name="Yamazaki M."/>
            <person name="Watanabe K."/>
            <person name="Kumagai A."/>
            <person name="Itakura S."/>
            <person name="Fukuzumi Y."/>
            <person name="Fujimori Y."/>
            <person name="Komiyama M."/>
            <person name="Tashiro H."/>
            <person name="Tanigami A."/>
            <person name="Fujiwara T."/>
            <person name="Ono T."/>
            <person name="Yamada K."/>
            <person name="Fujii Y."/>
            <person name="Ozaki K."/>
            <person name="Hirao M."/>
            <person name="Ohmori Y."/>
            <person name="Kawabata A."/>
            <person name="Hikiji T."/>
            <person name="Kobatake N."/>
            <person name="Inagaki H."/>
            <person name="Ikema Y."/>
            <person name="Okamoto S."/>
            <person name="Okitani R."/>
            <person name="Kawakami T."/>
            <person name="Noguchi S."/>
            <person name="Itoh T."/>
            <person name="Shigeta K."/>
            <person name="Senba T."/>
            <person name="Matsumura K."/>
            <person name="Nakajima Y."/>
            <person name="Mizuno T."/>
            <person name="Morinaga M."/>
            <person name="Sasaki M."/>
            <person name="Togashi T."/>
            <person name="Oyama M."/>
            <person name="Hata H."/>
            <person name="Watanabe M."/>
            <person name="Komatsu T."/>
            <person name="Mizushima-Sugano J."/>
            <person name="Satoh T."/>
            <person name="Shirai Y."/>
            <person name="Takahashi Y."/>
            <person name="Nakagawa K."/>
            <person name="Okumura K."/>
            <person name="Nagase T."/>
            <person name="Nomura N."/>
            <person name="Kikuchi H."/>
            <person name="Masuho Y."/>
            <person name="Yamashita R."/>
            <person name="Nakai K."/>
            <person name="Yada T."/>
            <person name="Nakamura Y."/>
            <person name="Ohara O."/>
            <person name="Isogai T."/>
            <person name="Sugano S."/>
        </authorList>
    </citation>
    <scope>NUCLEOTIDE SEQUENCE [LARGE SCALE MRNA]</scope>
    <source>
        <tissue>Testis</tissue>
    </source>
</reference>
<reference key="2">
    <citation type="submission" date="2005-09" db="EMBL/GenBank/DDBJ databases">
        <authorList>
            <person name="Mural R.J."/>
            <person name="Istrail S."/>
            <person name="Sutton G.G."/>
            <person name="Florea L."/>
            <person name="Halpern A.L."/>
            <person name="Mobarry C.M."/>
            <person name="Lippert R."/>
            <person name="Walenz B."/>
            <person name="Shatkay H."/>
            <person name="Dew I."/>
            <person name="Miller J.R."/>
            <person name="Flanigan M.J."/>
            <person name="Edwards N.J."/>
            <person name="Bolanos R."/>
            <person name="Fasulo D."/>
            <person name="Halldorsson B.V."/>
            <person name="Hannenhalli S."/>
            <person name="Turner R."/>
            <person name="Yooseph S."/>
            <person name="Lu F."/>
            <person name="Nusskern D.R."/>
            <person name="Shue B.C."/>
            <person name="Zheng X.H."/>
            <person name="Zhong F."/>
            <person name="Delcher A.L."/>
            <person name="Huson D.H."/>
            <person name="Kravitz S.A."/>
            <person name="Mouchard L."/>
            <person name="Reinert K."/>
            <person name="Remington K.A."/>
            <person name="Clark A.G."/>
            <person name="Waterman M.S."/>
            <person name="Eichler E.E."/>
            <person name="Adams M.D."/>
            <person name="Hunkapiller M.W."/>
            <person name="Myers E.W."/>
            <person name="Venter J.C."/>
        </authorList>
    </citation>
    <scope>NUCLEOTIDE SEQUENCE [LARGE SCALE GENOMIC DNA]</scope>
</reference>
<reference key="3">
    <citation type="journal article" date="2004" name="Genome Res.">
        <title>The status, quality, and expansion of the NIH full-length cDNA project: the Mammalian Gene Collection (MGC).</title>
        <authorList>
            <consortium name="The MGC Project Team"/>
        </authorList>
    </citation>
    <scope>NUCLEOTIDE SEQUENCE [LARGE SCALE MRNA]</scope>
    <source>
        <tissue>Testis</tissue>
    </source>
</reference>
<reference key="4">
    <citation type="journal article" date="2006" name="Proc. Natl. Acad. Sci. U.S.A.">
        <title>Emergence of primate genes by retrotransposon-mediated sequence transduction.</title>
        <authorList>
            <person name="Xing J."/>
            <person name="Wang H."/>
            <person name="Belancio V.P."/>
            <person name="Cordaux R."/>
            <person name="Deininger P.L."/>
            <person name="Batzer M.A."/>
        </authorList>
    </citation>
    <scope>TISSUE SPECIFICITY</scope>
    <scope>GENE EVOLUTION</scope>
</reference>
<dbReference type="EMBL" id="AK097473">
    <property type="protein sequence ID" value="BAC05067.1"/>
    <property type="molecule type" value="mRNA"/>
</dbReference>
<dbReference type="EMBL" id="CH471147">
    <property type="protein sequence ID" value="EAW80161.1"/>
    <property type="molecule type" value="Genomic_DNA"/>
</dbReference>
<dbReference type="EMBL" id="BC136422">
    <property type="protein sequence ID" value="AAI36423.1"/>
    <property type="molecule type" value="mRNA"/>
</dbReference>
<dbReference type="EMBL" id="BC140700">
    <property type="protein sequence ID" value="AAI40701.1"/>
    <property type="molecule type" value="mRNA"/>
</dbReference>
<dbReference type="CCDS" id="CCDS11293.1"/>
<dbReference type="RefSeq" id="NP_689675.1">
    <property type="nucleotide sequence ID" value="NM_152462.2"/>
</dbReference>
<dbReference type="SMR" id="Q8N808"/>
<dbReference type="STRING" id="9606.ENSP00000297307"/>
<dbReference type="TCDB" id="2.A.7.28.7">
    <property type="family name" value="the drug/metabolite transporter (dmt) superfamily"/>
</dbReference>
<dbReference type="iPTMnet" id="Q8N808"/>
<dbReference type="BioMuta" id="SLC35G3"/>
<dbReference type="DMDM" id="74729329"/>
<dbReference type="PaxDb" id="9606-ENSP00000297307"/>
<dbReference type="Antibodypedia" id="64101">
    <property type="antibodies" value="15 antibodies from 7 providers"/>
</dbReference>
<dbReference type="DNASU" id="146861"/>
<dbReference type="Ensembl" id="ENST00000297307.7">
    <property type="protein sequence ID" value="ENSP00000297307.5"/>
    <property type="gene ID" value="ENSG00000164729.8"/>
</dbReference>
<dbReference type="GeneID" id="146861"/>
<dbReference type="KEGG" id="hsa:146861"/>
<dbReference type="MANE-Select" id="ENST00000297307.7">
    <property type="protein sequence ID" value="ENSP00000297307.5"/>
    <property type="RefSeq nucleotide sequence ID" value="NM_152462.2"/>
    <property type="RefSeq protein sequence ID" value="NP_689675.1"/>
</dbReference>
<dbReference type="UCSC" id="uc002hjd.3">
    <property type="organism name" value="human"/>
</dbReference>
<dbReference type="AGR" id="HGNC:26848"/>
<dbReference type="CTD" id="146861"/>
<dbReference type="DisGeNET" id="146861"/>
<dbReference type="GeneCards" id="SLC35G3"/>
<dbReference type="HGNC" id="HGNC:26848">
    <property type="gene designation" value="SLC35G3"/>
</dbReference>
<dbReference type="HPA" id="ENSG00000164729">
    <property type="expression patterns" value="Tissue enriched (testis)"/>
</dbReference>
<dbReference type="neXtProt" id="NX_Q8N808"/>
<dbReference type="PharmGKB" id="PA134902447"/>
<dbReference type="VEuPathDB" id="HostDB:ENSG00000164729"/>
<dbReference type="eggNOG" id="ENOG502RCFC">
    <property type="taxonomic scope" value="Eukaryota"/>
</dbReference>
<dbReference type="GeneTree" id="ENSGT00940000153249"/>
<dbReference type="HOGENOM" id="CLU_055637_0_0_1"/>
<dbReference type="InParanoid" id="Q8N808"/>
<dbReference type="OMA" id="IRSRAFF"/>
<dbReference type="OrthoDB" id="306876at2759"/>
<dbReference type="PAN-GO" id="Q8N808">
    <property type="GO annotations" value="1 GO annotation based on evolutionary models"/>
</dbReference>
<dbReference type="PhylomeDB" id="Q8N808"/>
<dbReference type="TreeFam" id="TF331838"/>
<dbReference type="PathwayCommons" id="Q8N808"/>
<dbReference type="BioGRID-ORCS" id="146861">
    <property type="hits" value="44 hits in 1061 CRISPR screens"/>
</dbReference>
<dbReference type="ChiTaRS" id="SLC35G3">
    <property type="organism name" value="human"/>
</dbReference>
<dbReference type="GenomeRNAi" id="146861"/>
<dbReference type="Pharos" id="Q8N808">
    <property type="development level" value="Tdark"/>
</dbReference>
<dbReference type="PRO" id="PR:Q8N808"/>
<dbReference type="Proteomes" id="UP000005640">
    <property type="component" value="Chromosome 17"/>
</dbReference>
<dbReference type="RNAct" id="Q8N808">
    <property type="molecule type" value="protein"/>
</dbReference>
<dbReference type="Bgee" id="ENSG00000164729">
    <property type="expression patterns" value="Expressed in buccal mucosa cell and 9 other cell types or tissues"/>
</dbReference>
<dbReference type="GO" id="GO:0016020">
    <property type="term" value="C:membrane"/>
    <property type="evidence" value="ECO:0000318"/>
    <property type="project" value="GO_Central"/>
</dbReference>
<dbReference type="InterPro" id="IPR000620">
    <property type="entry name" value="EamA_dom"/>
</dbReference>
<dbReference type="PANTHER" id="PTHR22911">
    <property type="entry name" value="ACYL-MALONYL CONDENSING ENZYME-RELATED"/>
    <property type="match status" value="1"/>
</dbReference>
<dbReference type="PANTHER" id="PTHR22911:SF110">
    <property type="entry name" value="SOLUTE CARRIER FAMILY 35 MEMBER G3-RELATED"/>
    <property type="match status" value="1"/>
</dbReference>
<dbReference type="Pfam" id="PF00892">
    <property type="entry name" value="EamA"/>
    <property type="match status" value="2"/>
</dbReference>
<dbReference type="SUPFAM" id="SSF103481">
    <property type="entry name" value="Multidrug resistance efflux transporter EmrE"/>
    <property type="match status" value="2"/>
</dbReference>